<organism>
    <name type="scientific">Salmonella paratyphi B (strain ATCC BAA-1250 / SPB7)</name>
    <dbReference type="NCBI Taxonomy" id="1016998"/>
    <lineage>
        <taxon>Bacteria</taxon>
        <taxon>Pseudomonadati</taxon>
        <taxon>Pseudomonadota</taxon>
        <taxon>Gammaproteobacteria</taxon>
        <taxon>Enterobacterales</taxon>
        <taxon>Enterobacteriaceae</taxon>
        <taxon>Salmonella</taxon>
    </lineage>
</organism>
<comment type="function">
    <text evidence="1">Binds to DNA and alters its conformation. May be involved in regulation of gene expression, nucleoid organization and DNA protection.</text>
</comment>
<comment type="subunit">
    <text evidence="1">Homodimer.</text>
</comment>
<comment type="subcellular location">
    <subcellularLocation>
        <location evidence="1">Cytoplasm</location>
        <location evidence="1">Nucleoid</location>
    </subcellularLocation>
</comment>
<comment type="similarity">
    <text evidence="1">Belongs to the YbaB/EbfC family.</text>
</comment>
<evidence type="ECO:0000255" key="1">
    <source>
        <dbReference type="HAMAP-Rule" id="MF_00274"/>
    </source>
</evidence>
<accession>A9MW90</accession>
<feature type="chain" id="PRO_1000078771" description="Nucleoid-associated protein YbaB">
    <location>
        <begin position="1"/>
        <end position="109"/>
    </location>
</feature>
<dbReference type="EMBL" id="CP000886">
    <property type="protein sequence ID" value="ABX68449.1"/>
    <property type="molecule type" value="Genomic_DNA"/>
</dbReference>
<dbReference type="RefSeq" id="WP_000467098.1">
    <property type="nucleotide sequence ID" value="NC_010102.1"/>
</dbReference>
<dbReference type="SMR" id="A9MW90"/>
<dbReference type="KEGG" id="spq:SPAB_03087"/>
<dbReference type="PATRIC" id="fig|1016998.12.peg.2913"/>
<dbReference type="HOGENOM" id="CLU_140930_0_0_6"/>
<dbReference type="BioCyc" id="SENT1016998:SPAB_RS12595-MONOMER"/>
<dbReference type="Proteomes" id="UP000008556">
    <property type="component" value="Chromosome"/>
</dbReference>
<dbReference type="GO" id="GO:0043590">
    <property type="term" value="C:bacterial nucleoid"/>
    <property type="evidence" value="ECO:0007669"/>
    <property type="project" value="UniProtKB-UniRule"/>
</dbReference>
<dbReference type="GO" id="GO:0005829">
    <property type="term" value="C:cytosol"/>
    <property type="evidence" value="ECO:0007669"/>
    <property type="project" value="TreeGrafter"/>
</dbReference>
<dbReference type="GO" id="GO:0003677">
    <property type="term" value="F:DNA binding"/>
    <property type="evidence" value="ECO:0007669"/>
    <property type="project" value="UniProtKB-UniRule"/>
</dbReference>
<dbReference type="FunFam" id="3.30.1310.10:FF:000001">
    <property type="entry name" value="Nucleoid-associated protein YbaB"/>
    <property type="match status" value="1"/>
</dbReference>
<dbReference type="Gene3D" id="3.30.1310.10">
    <property type="entry name" value="Nucleoid-associated protein YbaB-like domain"/>
    <property type="match status" value="1"/>
</dbReference>
<dbReference type="HAMAP" id="MF_00274">
    <property type="entry name" value="DNA_YbaB_EbfC"/>
    <property type="match status" value="1"/>
</dbReference>
<dbReference type="InterPro" id="IPR036894">
    <property type="entry name" value="YbaB-like_sf"/>
</dbReference>
<dbReference type="InterPro" id="IPR004401">
    <property type="entry name" value="YbaB/EbfC"/>
</dbReference>
<dbReference type="NCBIfam" id="TIGR00103">
    <property type="entry name" value="DNA_YbaB_EbfC"/>
    <property type="match status" value="1"/>
</dbReference>
<dbReference type="PANTHER" id="PTHR33449">
    <property type="entry name" value="NUCLEOID-ASSOCIATED PROTEIN YBAB"/>
    <property type="match status" value="1"/>
</dbReference>
<dbReference type="PANTHER" id="PTHR33449:SF1">
    <property type="entry name" value="NUCLEOID-ASSOCIATED PROTEIN YBAB"/>
    <property type="match status" value="1"/>
</dbReference>
<dbReference type="Pfam" id="PF02575">
    <property type="entry name" value="YbaB_DNA_bd"/>
    <property type="match status" value="1"/>
</dbReference>
<dbReference type="PIRSF" id="PIRSF004555">
    <property type="entry name" value="UCP004555"/>
    <property type="match status" value="1"/>
</dbReference>
<dbReference type="SUPFAM" id="SSF82607">
    <property type="entry name" value="YbaB-like"/>
    <property type="match status" value="1"/>
</dbReference>
<protein>
    <recommendedName>
        <fullName evidence="1">Nucleoid-associated protein YbaB</fullName>
    </recommendedName>
</protein>
<gene>
    <name evidence="1" type="primary">ybaB</name>
    <name type="ordered locus">SPAB_03087</name>
</gene>
<name>YBAB_SALPB</name>
<sequence length="109" mass="12015">MFGKGGLGNLMKQAQQMQEKMQKMQEEIAQLEVTGESGAGLVKVTINGAHNCRRVEIDPSLLEDDKEMLEDLVAAAFNDAARRIEETQKEKMASVSSGMQLPPGFKMPF</sequence>
<reference key="1">
    <citation type="submission" date="2007-11" db="EMBL/GenBank/DDBJ databases">
        <authorList>
            <consortium name="The Salmonella enterica serovar Paratyphi B Genome Sequencing Project"/>
            <person name="McClelland M."/>
            <person name="Sanderson E.K."/>
            <person name="Porwollik S."/>
            <person name="Spieth J."/>
            <person name="Clifton W.S."/>
            <person name="Fulton R."/>
            <person name="Cordes M."/>
            <person name="Wollam A."/>
            <person name="Shah N."/>
            <person name="Pepin K."/>
            <person name="Bhonagiri V."/>
            <person name="Nash W."/>
            <person name="Johnson M."/>
            <person name="Thiruvilangam P."/>
            <person name="Wilson R."/>
        </authorList>
    </citation>
    <scope>NUCLEOTIDE SEQUENCE [LARGE SCALE GENOMIC DNA]</scope>
    <source>
        <strain>ATCC BAA-1250 / SPB7</strain>
    </source>
</reference>
<proteinExistence type="inferred from homology"/>
<keyword id="KW-0963">Cytoplasm</keyword>
<keyword id="KW-0238">DNA-binding</keyword>